<dbReference type="EMBL" id="BC105359">
    <property type="protein sequence ID" value="AAI05360.1"/>
    <property type="molecule type" value="mRNA"/>
</dbReference>
<dbReference type="RefSeq" id="NP_001039779.1">
    <property type="nucleotide sequence ID" value="NM_001046314.1"/>
</dbReference>
<dbReference type="SMR" id="Q2KJG2"/>
<dbReference type="FunCoup" id="Q2KJG2">
    <property type="interactions" value="2015"/>
</dbReference>
<dbReference type="STRING" id="9913.ENSBTAP00000058608"/>
<dbReference type="PeptideAtlas" id="Q2KJG2"/>
<dbReference type="Ensembl" id="ENSBTAT00000077211.1">
    <property type="protein sequence ID" value="ENSBTAP00000058608.1"/>
    <property type="gene ID" value="ENSBTAG00000051486.1"/>
</dbReference>
<dbReference type="GeneID" id="530547"/>
<dbReference type="KEGG" id="bta:530547"/>
<dbReference type="CTD" id="51569"/>
<dbReference type="VEuPathDB" id="HostDB:ENSBTAG00000051486"/>
<dbReference type="VGNC" id="VGNC:107013">
    <property type="gene designation" value="UFM1"/>
</dbReference>
<dbReference type="GeneTree" id="ENSGT00390000010391"/>
<dbReference type="InParanoid" id="Q2KJG2"/>
<dbReference type="OMA" id="MEHAVGK"/>
<dbReference type="OrthoDB" id="284357at2759"/>
<dbReference type="Proteomes" id="UP000009136">
    <property type="component" value="Chromosome 12"/>
</dbReference>
<dbReference type="Bgee" id="ENSBTAG00000051486">
    <property type="expression patterns" value="Expressed in caput epididymis and 107 other cell types or tissues"/>
</dbReference>
<dbReference type="GO" id="GO:0005737">
    <property type="term" value="C:cytoplasm"/>
    <property type="evidence" value="ECO:0000250"/>
    <property type="project" value="UniProtKB"/>
</dbReference>
<dbReference type="GO" id="GO:0005634">
    <property type="term" value="C:nucleus"/>
    <property type="evidence" value="ECO:0000250"/>
    <property type="project" value="UniProtKB"/>
</dbReference>
<dbReference type="GO" id="GO:0007420">
    <property type="term" value="P:brain development"/>
    <property type="evidence" value="ECO:0000250"/>
    <property type="project" value="UniProtKB"/>
</dbReference>
<dbReference type="GO" id="GO:1990592">
    <property type="term" value="P:protein K69-linked ufmylation"/>
    <property type="evidence" value="ECO:0000250"/>
    <property type="project" value="UniProtKB"/>
</dbReference>
<dbReference type="GO" id="GO:0071569">
    <property type="term" value="P:protein ufmylation"/>
    <property type="evidence" value="ECO:0000250"/>
    <property type="project" value="UniProtKB"/>
</dbReference>
<dbReference type="GO" id="GO:0033146">
    <property type="term" value="P:regulation of intracellular estrogen receptor signaling pathway"/>
    <property type="evidence" value="ECO:0000250"/>
    <property type="project" value="UniProtKB"/>
</dbReference>
<dbReference type="GO" id="GO:0034976">
    <property type="term" value="P:response to endoplasmic reticulum stress"/>
    <property type="evidence" value="ECO:0000250"/>
    <property type="project" value="UniProtKB"/>
</dbReference>
<dbReference type="GO" id="GO:0061709">
    <property type="term" value="P:reticulophagy"/>
    <property type="evidence" value="ECO:0000250"/>
    <property type="project" value="UniProtKB"/>
</dbReference>
<dbReference type="CDD" id="cd01766">
    <property type="entry name" value="Ubl_UFM1"/>
    <property type="match status" value="1"/>
</dbReference>
<dbReference type="FunFam" id="3.10.20.90:FF:000044">
    <property type="entry name" value="Ubiquitin-fold modifier 1"/>
    <property type="match status" value="1"/>
</dbReference>
<dbReference type="Gene3D" id="3.10.20.90">
    <property type="entry name" value="Phosphatidylinositol 3-kinase Catalytic Subunit, Chain A, domain 1"/>
    <property type="match status" value="1"/>
</dbReference>
<dbReference type="InterPro" id="IPR029071">
    <property type="entry name" value="Ubiquitin-like_domsf"/>
</dbReference>
<dbReference type="InterPro" id="IPR005375">
    <property type="entry name" value="UFM1"/>
</dbReference>
<dbReference type="PANTHER" id="PTHR15825">
    <property type="entry name" value="UBIQUITIN-FOLD MODIFIER 1"/>
    <property type="match status" value="1"/>
</dbReference>
<dbReference type="PANTHER" id="PTHR15825:SF5">
    <property type="entry name" value="UBIQUITIN-FOLD MODIFIER 1"/>
    <property type="match status" value="1"/>
</dbReference>
<dbReference type="Pfam" id="PF03671">
    <property type="entry name" value="Ufm1"/>
    <property type="match status" value="1"/>
</dbReference>
<dbReference type="PIRSF" id="PIRSF038027">
    <property type="entry name" value="Ubiquitin-like_Ufm1"/>
    <property type="match status" value="1"/>
</dbReference>
<dbReference type="SUPFAM" id="SSF54236">
    <property type="entry name" value="Ubiquitin-like"/>
    <property type="match status" value="1"/>
</dbReference>
<reference key="1">
    <citation type="submission" date="2005-09" db="EMBL/GenBank/DDBJ databases">
        <authorList>
            <consortium name="NIH - Mammalian Gene Collection (MGC) project"/>
        </authorList>
    </citation>
    <scope>NUCLEOTIDE SEQUENCE [LARGE SCALE MRNA]</scope>
    <source>
        <strain>Crossbred X Angus</strain>
        <tissue>Ileum</tissue>
    </source>
</reference>
<gene>
    <name evidence="1" type="primary">UFM1</name>
</gene>
<organism>
    <name type="scientific">Bos taurus</name>
    <name type="common">Bovine</name>
    <dbReference type="NCBI Taxonomy" id="9913"/>
    <lineage>
        <taxon>Eukaryota</taxon>
        <taxon>Metazoa</taxon>
        <taxon>Chordata</taxon>
        <taxon>Craniata</taxon>
        <taxon>Vertebrata</taxon>
        <taxon>Euteleostomi</taxon>
        <taxon>Mammalia</taxon>
        <taxon>Eutheria</taxon>
        <taxon>Laurasiatheria</taxon>
        <taxon>Artiodactyla</taxon>
        <taxon>Ruminantia</taxon>
        <taxon>Pecora</taxon>
        <taxon>Bovidae</taxon>
        <taxon>Bovinae</taxon>
        <taxon>Bos</taxon>
    </lineage>
</organism>
<protein>
    <recommendedName>
        <fullName evidence="1">Ubiquitin-fold modifier 1</fullName>
    </recommendedName>
</protein>
<sequence>MSKVSFKITLTSDPRLPYKVLSVPESTPFTAVLKFAAEEFKVPAATSAIITNDGIGINPAQTAGNVFLKHGSELRIIPRDRVGHC</sequence>
<comment type="function">
    <text evidence="1">Ubiquitin-like modifier which can be covalently attached via an isopeptide bond to lysine residues of substrate proteins as a monomer or a lysine-linked polymer. The so-called ufmylation, requires the UFM1-activating E1 enzyme UBA5, the UFM1-conjugating E2 enzyme UFC1, and the UFM1-ligase E3 enzyme UFL1. Ufmylation is involved in various processes, such as ribosome recycling, response to DNA damage, transcription or reticulophagy (also called ER-phagy) induced in response to endoplasmic reticulum stress.</text>
</comment>
<comment type="subunit">
    <text evidence="1">Interacts with UBA5. Interacts with UFC1.</text>
</comment>
<comment type="subcellular location">
    <subcellularLocation>
        <location evidence="1">Nucleus</location>
    </subcellularLocation>
    <subcellularLocation>
        <location evidence="1">Cytoplasm</location>
    </subcellularLocation>
</comment>
<comment type="PTM">
    <text evidence="1">UFM1 precursor is cleaved by UFSP1, promoting its maturation: processing of the C-terminal Ser-Cys dipeptide is required to expose its C-terminal conserved Gly residue.</text>
</comment>
<comment type="similarity">
    <text evidence="2">Belongs to the UFM1 family.</text>
</comment>
<feature type="chain" id="PRO_0000244597" description="Ubiquitin-fold modifier 1">
    <location>
        <begin position="1"/>
        <end position="83"/>
    </location>
</feature>
<feature type="propeptide" id="PRO_0000244598" description="Removed in mature form" evidence="1">
    <location>
        <begin position="84"/>
        <end position="85"/>
    </location>
</feature>
<feature type="cross-link" description="Glycyl lysine isopeptide (Lys-Gly) (interchain with G-Cter in UFM1)" evidence="1">
    <location>
        <position position="69"/>
    </location>
</feature>
<feature type="cross-link" description="Glycyl lysine isopeptide (Gly-Lys) (interchain with K-? in acceptor proteins)" evidence="1">
    <location>
        <position position="83"/>
    </location>
</feature>
<proteinExistence type="inferred from homology"/>
<evidence type="ECO:0000250" key="1">
    <source>
        <dbReference type="UniProtKB" id="P61960"/>
    </source>
</evidence>
<evidence type="ECO:0000305" key="2"/>
<name>UFM1_BOVIN</name>
<accession>Q2KJG2</accession>
<keyword id="KW-0963">Cytoplasm</keyword>
<keyword id="KW-1017">Isopeptide bond</keyword>
<keyword id="KW-0539">Nucleus</keyword>
<keyword id="KW-1185">Reference proteome</keyword>
<keyword id="KW-0832">Ubl conjugation</keyword>
<keyword id="KW-0833">Ubl conjugation pathway</keyword>